<accession>Q62785</accession>
<accession>Q62890</accession>
<dbReference type="EMBL" id="U26541">
    <property type="protein sequence ID" value="AAC52455.1"/>
    <property type="molecule type" value="mRNA"/>
</dbReference>
<dbReference type="EMBL" id="U41744">
    <property type="protein sequence ID" value="AAC52531.1"/>
    <property type="molecule type" value="mRNA"/>
</dbReference>
<dbReference type="EMBL" id="BC088140">
    <property type="protein sequence ID" value="AAH88140.1"/>
    <property type="molecule type" value="mRNA"/>
</dbReference>
<dbReference type="PIR" id="S62782">
    <property type="entry name" value="S62782"/>
</dbReference>
<dbReference type="RefSeq" id="NP_072117.1">
    <property type="nucleotide sequence ID" value="NM_022595.2"/>
</dbReference>
<dbReference type="SMR" id="Q62785"/>
<dbReference type="BioGRID" id="249111">
    <property type="interactions" value="2"/>
</dbReference>
<dbReference type="FunCoup" id="Q62785">
    <property type="interactions" value="3632"/>
</dbReference>
<dbReference type="STRING" id="10116.ENSRNOP00000001310"/>
<dbReference type="iPTMnet" id="Q62785"/>
<dbReference type="PhosphoSitePlus" id="Q62785"/>
<dbReference type="jPOST" id="Q62785"/>
<dbReference type="PaxDb" id="10116-ENSRNOP00000001310"/>
<dbReference type="Ensembl" id="ENSRNOT00000001310.8">
    <property type="protein sequence ID" value="ENSRNOP00000001310.4"/>
    <property type="gene ID" value="ENSRNOG00000000990.8"/>
</dbReference>
<dbReference type="GeneID" id="64527"/>
<dbReference type="KEGG" id="rno:64527"/>
<dbReference type="AGR" id="RGD:620442"/>
<dbReference type="CTD" id="11333"/>
<dbReference type="RGD" id="620442">
    <property type="gene designation" value="Pdap1"/>
</dbReference>
<dbReference type="eggNOG" id="KOG3375">
    <property type="taxonomic scope" value="Eukaryota"/>
</dbReference>
<dbReference type="GeneTree" id="ENSGT00390000018509"/>
<dbReference type="HOGENOM" id="CLU_084870_1_0_1"/>
<dbReference type="InParanoid" id="Q62785"/>
<dbReference type="OrthoDB" id="91441at9989"/>
<dbReference type="PhylomeDB" id="Q62785"/>
<dbReference type="TreeFam" id="TF324338"/>
<dbReference type="Reactome" id="R-RNO-6798695">
    <property type="pathway name" value="Neutrophil degranulation"/>
</dbReference>
<dbReference type="PRO" id="PR:Q62785"/>
<dbReference type="Proteomes" id="UP000002494">
    <property type="component" value="Chromosome 12"/>
</dbReference>
<dbReference type="Bgee" id="ENSRNOG00000000990">
    <property type="expression patterns" value="Expressed in ovary and 20 other cell types or tissues"/>
</dbReference>
<dbReference type="GO" id="GO:0005829">
    <property type="term" value="C:cytosol"/>
    <property type="evidence" value="ECO:0000318"/>
    <property type="project" value="GO_Central"/>
</dbReference>
<dbReference type="InterPro" id="IPR019380">
    <property type="entry name" value="Casein_kinase_sb_PP28"/>
</dbReference>
<dbReference type="InterPro" id="IPR039876">
    <property type="entry name" value="HAP28"/>
</dbReference>
<dbReference type="PANTHER" id="PTHR22055">
    <property type="entry name" value="28 KDA HEAT- AND ACID-STABLE PHOSPHOPROTEIN PDGF-ASSOCIATED PROTEIN"/>
    <property type="match status" value="1"/>
</dbReference>
<dbReference type="Pfam" id="PF10252">
    <property type="entry name" value="PP28"/>
    <property type="match status" value="1"/>
</dbReference>
<keyword id="KW-0007">Acetylation</keyword>
<keyword id="KW-0903">Direct protein sequencing</keyword>
<keyword id="KW-1017">Isopeptide bond</keyword>
<keyword id="KW-0488">Methylation</keyword>
<keyword id="KW-0597">Phosphoprotein</keyword>
<keyword id="KW-1185">Reference proteome</keyword>
<keyword id="KW-0832">Ubl conjugation</keyword>
<gene>
    <name type="primary">Pdap1</name>
    <name type="synonym">Haspp28</name>
</gene>
<feature type="chain" id="PRO_0000083899" description="28 kDa heat- and acid-stable phosphoprotein">
    <location>
        <begin position="1"/>
        <end position="181"/>
    </location>
</feature>
<feature type="region of interest" description="Disordered" evidence="3">
    <location>
        <begin position="1"/>
        <end position="118"/>
    </location>
</feature>
<feature type="region of interest" description="Disordered" evidence="3">
    <location>
        <begin position="151"/>
        <end position="181"/>
    </location>
</feature>
<feature type="compositionally biased region" description="Basic residues" evidence="3">
    <location>
        <begin position="1"/>
        <end position="14"/>
    </location>
</feature>
<feature type="compositionally biased region" description="Basic and acidic residues" evidence="3">
    <location>
        <begin position="50"/>
        <end position="59"/>
    </location>
</feature>
<feature type="compositionally biased region" description="Acidic residues" evidence="3">
    <location>
        <begin position="60"/>
        <end position="69"/>
    </location>
</feature>
<feature type="compositionally biased region" description="Basic and acidic residues" evidence="3">
    <location>
        <begin position="102"/>
        <end position="118"/>
    </location>
</feature>
<feature type="compositionally biased region" description="Basic and acidic residues" evidence="3">
    <location>
        <begin position="151"/>
        <end position="167"/>
    </location>
</feature>
<feature type="modified residue" description="Phosphothreonine" evidence="6">
    <location>
        <position position="18"/>
    </location>
</feature>
<feature type="modified residue" description="Phosphoserine" evidence="1">
    <location>
        <position position="19"/>
    </location>
</feature>
<feature type="modified residue" description="Phosphoserine" evidence="6">
    <location>
        <position position="57"/>
    </location>
</feature>
<feature type="modified residue" description="Phosphoserine" evidence="5 6">
    <location>
        <position position="60"/>
    </location>
</feature>
<feature type="modified residue" description="Phosphoserine" evidence="5 6">
    <location>
        <position position="63"/>
    </location>
</feature>
<feature type="modified residue" description="Phosphotyrosine" evidence="2">
    <location>
        <position position="70"/>
    </location>
</feature>
<feature type="modified residue" description="N6-methyllysine" evidence="1">
    <location>
        <position position="126"/>
    </location>
</feature>
<feature type="modified residue" description="N6-acetyllysine" evidence="1">
    <location>
        <position position="132"/>
    </location>
</feature>
<feature type="modified residue" description="N6-acetyllysine" evidence="2">
    <location>
        <position position="164"/>
    </location>
</feature>
<feature type="modified residue" description="Phosphoserine" evidence="1">
    <location>
        <position position="176"/>
    </location>
</feature>
<feature type="modified residue" description="Phosphoserine" evidence="1">
    <location>
        <position position="178"/>
    </location>
</feature>
<feature type="cross-link" description="Glycyl lysine isopeptide (Lys-Gly) (interchain with G-Cter in SUMO2)" evidence="1">
    <location>
        <position position="52"/>
    </location>
</feature>
<feature type="sequence conflict" description="In Ref. 2; AAC52531." evidence="4" ref="2">
    <original>R</original>
    <variation>S</variation>
    <location>
        <position position="13"/>
    </location>
</feature>
<proteinExistence type="evidence at protein level"/>
<reference key="1">
    <citation type="journal article" date="1996" name="Arch. Biochem. Biophys.">
        <title>Molecular cloning and characterization of a novel casein kinase II substrate, HASPP28, from rat brain.</title>
        <authorList>
            <person name="Shen L."/>
            <person name="Huang K.P."/>
            <person name="Chen H.C."/>
            <person name="Huang F.L."/>
        </authorList>
    </citation>
    <scope>NUCLEOTIDE SEQUENCE [MRNA]</scope>
    <scope>PARTIAL PROTEIN SEQUENCE</scope>
    <source>
        <strain>Sprague-Dawley</strain>
        <tissue>Brain</tissue>
    </source>
</reference>
<reference key="2">
    <citation type="journal article" date="1996" name="J. Neurochem.">
        <title>Characterization of a novel platelet-derived growth factor-associated protein.</title>
        <authorList>
            <person name="Fischer W.H."/>
            <person name="Schubert D."/>
        </authorList>
    </citation>
    <scope>NUCLEOTIDE SEQUENCE [MRNA]</scope>
    <source>
        <tissue>Retina</tissue>
    </source>
</reference>
<reference key="3">
    <citation type="journal article" date="2004" name="Genome Res.">
        <title>The status, quality, and expansion of the NIH full-length cDNA project: the Mammalian Gene Collection (MGC).</title>
        <authorList>
            <consortium name="The MGC Project Team"/>
        </authorList>
    </citation>
    <scope>NUCLEOTIDE SEQUENCE [LARGE SCALE MRNA]</scope>
    <source>
        <tissue>Thymus</tissue>
    </source>
</reference>
<reference key="4">
    <citation type="journal article" date="2006" name="J. Proteome Res.">
        <title>Phosphoproteomic analysis of rat liver by high capacity IMAC and LC-MS/MS.</title>
        <authorList>
            <person name="Moser K."/>
            <person name="White F.M."/>
        </authorList>
    </citation>
    <scope>PHOSPHORYLATION [LARGE SCALE ANALYSIS] AT SER-60 AND SER-63</scope>
    <scope>IDENTIFICATION BY MASS SPECTROMETRY [LARGE SCALE ANALYSIS]</scope>
</reference>
<reference key="5">
    <citation type="journal article" date="2012" name="Nat. Commun.">
        <title>Quantitative maps of protein phosphorylation sites across 14 different rat organs and tissues.</title>
        <authorList>
            <person name="Lundby A."/>
            <person name="Secher A."/>
            <person name="Lage K."/>
            <person name="Nordsborg N.B."/>
            <person name="Dmytriyev A."/>
            <person name="Lundby C."/>
            <person name="Olsen J.V."/>
        </authorList>
    </citation>
    <scope>PHOSPHORYLATION [LARGE SCALE ANALYSIS] AT THR-18; SER-57; SER-60 AND SER-63</scope>
    <scope>IDENTIFICATION BY MASS SPECTROMETRY [LARGE SCALE ANALYSIS]</scope>
</reference>
<organism>
    <name type="scientific">Rattus norvegicus</name>
    <name type="common">Rat</name>
    <dbReference type="NCBI Taxonomy" id="10116"/>
    <lineage>
        <taxon>Eukaryota</taxon>
        <taxon>Metazoa</taxon>
        <taxon>Chordata</taxon>
        <taxon>Craniata</taxon>
        <taxon>Vertebrata</taxon>
        <taxon>Euteleostomi</taxon>
        <taxon>Mammalia</taxon>
        <taxon>Eutheria</taxon>
        <taxon>Euarchontoglires</taxon>
        <taxon>Glires</taxon>
        <taxon>Rodentia</taxon>
        <taxon>Myomorpha</taxon>
        <taxon>Muroidea</taxon>
        <taxon>Muridae</taxon>
        <taxon>Murinae</taxon>
        <taxon>Rattus</taxon>
    </lineage>
</organism>
<comment type="tissue specificity">
    <text>Present in all tissues tested, including brain, lung, spleen, kidney, liver, heart, and muscle, in decreasing order of abundance.</text>
</comment>
<comment type="PTM">
    <text>Phosphorylated by several kinases in vitro. In vivo, can be phosphorylated by CK2.</text>
</comment>
<comment type="similarity">
    <text evidence="4">Belongs to the PDAP1 family.</text>
</comment>
<sequence>MPKGGRKGGHKGRVRQYTSPEEIDAQLQAEKQKANEEDEQEEGGDGASGDPKKEKKSLDSDESEDEDDDYQQKRKGVEGLIDIENPNRVAQTTKKVTQLDLDGPKELSRREREEIEKQKAKERYMKMHLAGKTEQAKADLARLAIIRKQREEAARKKEEERKAKDDATLSGKRMQSLSLNK</sequence>
<evidence type="ECO:0000250" key="1">
    <source>
        <dbReference type="UniProtKB" id="Q13442"/>
    </source>
</evidence>
<evidence type="ECO:0000250" key="2">
    <source>
        <dbReference type="UniProtKB" id="Q3UHX2"/>
    </source>
</evidence>
<evidence type="ECO:0000256" key="3">
    <source>
        <dbReference type="SAM" id="MobiDB-lite"/>
    </source>
</evidence>
<evidence type="ECO:0000305" key="4"/>
<evidence type="ECO:0007744" key="5">
    <source>
    </source>
</evidence>
<evidence type="ECO:0007744" key="6">
    <source>
    </source>
</evidence>
<protein>
    <recommendedName>
        <fullName>28 kDa heat- and acid-stable phosphoprotein</fullName>
    </recommendedName>
    <alternativeName>
        <fullName>PDGF-associated protein</fullName>
        <shortName>PAP</shortName>
    </alternativeName>
    <alternativeName>
        <fullName>PDGFA-associated protein 1</fullName>
        <shortName>PAP1</shortName>
    </alternativeName>
</protein>
<name>HAP28_RAT</name>